<proteinExistence type="evidence at protein level"/>
<name>CARC_METRE</name>
<protein>
    <recommendedName>
        <fullName>2-hydroxy-6-oxo-6-(2'-aminophenyl)hexa-2,4-dienoic acid hydrolase</fullName>
        <shortName>HOPDA</shortName>
        <ecNumber>3.7.1.13</ecNumber>
    </recommendedName>
</protein>
<sequence>MLNKAEQISEKSESAYVERFVNAGGVETRYLEAGKGQPVILIHGGGAGAESEGNWRNVIPILARHYRVIAMDMLGFGKTAKPDIEYTQDRRIRHLHDFIKAMNFDGKVSIVGNSMGGATGLGVSVLHSELVNALVLMGSAGLVVEIHEDLRPIINYDFTREGMVHLVKALTNDGFKIDDAMINSRYTYATDEATRKAYVATMQWIREQGGLFYDPEFIRKVPVPTLVVHGKDDKVVPVETAYKFLDLIDDSWGYIIPHCGHWAMIEHPEDFANATLSFLSRRADITRAAA</sequence>
<accession>Q9AQM4</accession>
<accession>Q8GI17</accession>
<geneLocation type="plasmid">
    <name>pCAR1</name>
</geneLocation>
<gene>
    <name type="primary">carC</name>
</gene>
<feature type="chain" id="PRO_0000422736" description="2-hydroxy-6-oxo-6-(2'-aminophenyl)hexa-2,4-dienoic acid hydrolase">
    <location>
        <begin position="1"/>
        <end position="290"/>
    </location>
</feature>
<feature type="active site" evidence="5">
    <location>
        <position position="114"/>
    </location>
</feature>
<feature type="active site" evidence="1">
    <location>
        <position position="233"/>
    </location>
</feature>
<feature type="active site" evidence="1">
    <location>
        <position position="261"/>
    </location>
</feature>
<feature type="mutagenesis site" description="40-fold decrease in reduction in hydrolase activity." evidence="3">
    <original>S</original>
    <variation>A</variation>
    <location>
        <position position="114"/>
    </location>
</feature>
<dbReference type="EC" id="3.7.1.13"/>
<dbReference type="EMBL" id="AB047548">
    <property type="protein sequence ID" value="BAB32769.1"/>
    <property type="molecule type" value="Genomic_DNA"/>
</dbReference>
<dbReference type="EMBL" id="AB088420">
    <property type="protein sequence ID" value="BAC41548.1"/>
    <property type="molecule type" value="Genomic_DNA"/>
</dbReference>
<dbReference type="RefSeq" id="NP_758570.1">
    <property type="nucleotide sequence ID" value="NC_004444.1"/>
</dbReference>
<dbReference type="RefSeq" id="WP_011077881.1">
    <property type="nucleotide sequence ID" value="NC_004444.1"/>
</dbReference>
<dbReference type="SMR" id="Q9AQM4"/>
<dbReference type="ESTHER" id="psest-bpdF">
    <property type="family name" value="Carbon-carbon_bond_hydrolase"/>
</dbReference>
<dbReference type="BioCyc" id="MetaCyc:MONOMER-15764"/>
<dbReference type="BRENDA" id="3.7.1.13">
    <property type="organism ID" value="7692"/>
</dbReference>
<dbReference type="UniPathway" id="UPA01031"/>
<dbReference type="GO" id="GO:0018768">
    <property type="term" value="F:2-hydroxy-6-oxo-6-(2'-aminophenyl)hexa-2,4-dienoate hydrolase activity"/>
    <property type="evidence" value="ECO:0007669"/>
    <property type="project" value="UniProtKB-EC"/>
</dbReference>
<dbReference type="GO" id="GO:0016823">
    <property type="term" value="F:hydrolase activity, acting on acid carbon-carbon bonds, in ketonic substances"/>
    <property type="evidence" value="ECO:0000314"/>
    <property type="project" value="UniProtKB"/>
</dbReference>
<dbReference type="GO" id="GO:0046232">
    <property type="term" value="P:carbazole catabolic process"/>
    <property type="evidence" value="ECO:0000314"/>
    <property type="project" value="UniProtKB"/>
</dbReference>
<dbReference type="FunFam" id="3.40.50.1820:FF:000615">
    <property type="entry name" value="Meta cleavage compound hydrolase"/>
    <property type="match status" value="1"/>
</dbReference>
<dbReference type="Gene3D" id="3.40.50.1820">
    <property type="entry name" value="alpha/beta hydrolase"/>
    <property type="match status" value="1"/>
</dbReference>
<dbReference type="InterPro" id="IPR000073">
    <property type="entry name" value="AB_hydrolase_1"/>
</dbReference>
<dbReference type="InterPro" id="IPR029058">
    <property type="entry name" value="AB_hydrolase_fold"/>
</dbReference>
<dbReference type="PANTHER" id="PTHR46438">
    <property type="entry name" value="ALPHA/BETA-HYDROLASES SUPERFAMILY PROTEIN"/>
    <property type="match status" value="1"/>
</dbReference>
<dbReference type="PANTHER" id="PTHR46438:SF11">
    <property type="entry name" value="LIPASE-RELATED"/>
    <property type="match status" value="1"/>
</dbReference>
<dbReference type="Pfam" id="PF00561">
    <property type="entry name" value="Abhydrolase_1"/>
    <property type="match status" value="1"/>
</dbReference>
<dbReference type="PRINTS" id="PR00111">
    <property type="entry name" value="ABHYDROLASE"/>
</dbReference>
<dbReference type="SUPFAM" id="SSF53474">
    <property type="entry name" value="alpha/beta-Hydrolases"/>
    <property type="match status" value="1"/>
</dbReference>
<organism>
    <name type="scientific">Metapseudomonas resinovorans</name>
    <name type="common">Pseudomonas resinovorans</name>
    <dbReference type="NCBI Taxonomy" id="53412"/>
    <lineage>
        <taxon>Bacteria</taxon>
        <taxon>Pseudomonadati</taxon>
        <taxon>Pseudomonadota</taxon>
        <taxon>Gammaproteobacteria</taxon>
        <taxon>Pseudomonadales</taxon>
        <taxon>Pseudomonadaceae</taxon>
        <taxon>Metapseudomonas</taxon>
    </lineage>
</organism>
<evidence type="ECO:0000250" key="1"/>
<evidence type="ECO:0000269" key="2">
    <source>
    </source>
</evidence>
<evidence type="ECO:0000269" key="3">
    <source>
    </source>
</evidence>
<evidence type="ECO:0000269" key="4">
    <source>
    </source>
</evidence>
<evidence type="ECO:0000305" key="5"/>
<comment type="function">
    <text evidence="2 3 4">Involved in the degradation of carbazole, a toxic N-heterocyclic aromatic compound containing dibenzopyrrole system. Catalyzes the hydrolytic cleavage of a carbon-carbon bond of 2-hydroxy-6-oxo-6-(2'-aminophenyl)hexa-2,4-dienoic acid (HOPDA) to yield anthranilate. CarC is specific for 2-hydroxy-6-oxo-6-phenylhexa-2,4-dienoic acid (6-phenyl-HODA), and has little activity toward 2-hydroxy-6-oxohepta-2,4-dienoic acid and 2-hydroxymuconic semialdehyde. The effect of the presence of an amino group or hydroxyl group at the 2'-position of phenyl moiety of 6-phenyl-HODA on the enzyme activity is found to be small.</text>
</comment>
<comment type="catalytic activity">
    <reaction evidence="2 3">
        <text>(2E,4E)-6-(2-aminophenyl)-2-hydroxy-6-oxohexa-2,4-dienoate + H2O = (2E)-2-hydroxypenta-2,4-dienoate + anthranilate + H(+)</text>
        <dbReference type="Rhea" id="RHEA:27870"/>
        <dbReference type="ChEBI" id="CHEBI:15377"/>
        <dbReference type="ChEBI" id="CHEBI:15378"/>
        <dbReference type="ChEBI" id="CHEBI:16567"/>
        <dbReference type="ChEBI" id="CHEBI:60885"/>
        <dbReference type="ChEBI" id="CHEBI:60886"/>
        <dbReference type="EC" id="3.7.1.13"/>
    </reaction>
</comment>
<comment type="biophysicochemical properties">
    <kinetics>
        <KM evidence="2 3">2.51 uM for 6-phenyl-HODA (at 50 mM sodium phosphate, pH 7.5, 25 degrees Celsius)</KM>
        <KM evidence="2 3">4.6 uM for HOPDA (at pH 7.5 and 25 degrees Celsius)</KM>
        <Vmax evidence="2 3">3.3 mmol/min/mg enzyme with HOPDA as substrate (at pH 7.5 and 25 degrees Celsius)</Vmax>
        <text>kcat is 2.14 sec(-1) for 6-phenyl-HODA (at 50 mM sodium phosphate, pH 7.5, 25 degrees Celsius).</text>
    </kinetics>
    <phDependence>
        <text evidence="2 3">Optimum pH is between 7.0 and 7.5.</text>
    </phDependence>
    <temperatureDependence>
        <text evidence="2 3">Optimum temperature is 58 degrees Celsius.</text>
    </temperatureDependence>
</comment>
<comment type="pathway">
    <text>Xenobiotic degradation; carbazole degradation.</text>
</comment>
<comment type="subunit">
    <text evidence="2 3">Homodimer.</text>
</comment>
<comment type="similarity">
    <text evidence="5">Belongs to the DmpD/TodF/XylF esterase family.</text>
</comment>
<keyword id="KW-0058">Aromatic hydrocarbons catabolism</keyword>
<keyword id="KW-0378">Hydrolase</keyword>
<keyword id="KW-0614">Plasmid</keyword>
<reference key="1">
    <citation type="journal article" date="1997" name="J. Bacteriol.">
        <title>Cloning of genes involved in carbazole degradation of Pseudomonas sp. strain CA10: nucleotide sequences of genes and characterization of meta-cleavage enzymes and hydrolase.</title>
        <authorList>
            <person name="Sato S.I."/>
            <person name="Ouchiyama N."/>
            <person name="Kimura T."/>
            <person name="Nojiri H."/>
            <person name="Yamane H."/>
            <person name="Omori T."/>
        </authorList>
    </citation>
    <scope>NUCLEOTIDE SEQUENCE [GENOMIC DNA]</scope>
    <scope>FUNCTION</scope>
    <scope>SUBSTRATE SPECIFICITY</scope>
    <scope>NOMENCLATURE</scope>
    <source>
        <strain>CA10</strain>
    </source>
</reference>
<reference key="2">
    <citation type="journal article" date="1997" name="J. Bacteriol.">
        <title>Identification and characterization of genes encoding carbazole 1,9a-dioxygenase in Pseudomonas sp. strain CA10.</title>
        <authorList>
            <person name="Sato S.I."/>
            <person name="Nam J.W."/>
            <person name="Kasuga K."/>
            <person name="Nojiri H."/>
            <person name="Yamane H."/>
            <person name="Omori T."/>
        </authorList>
    </citation>
    <scope>NUCLEOTIDE SEQUENCE [GENOMIC DNA]</scope>
    <source>
        <strain>CA10</strain>
    </source>
</reference>
<reference key="3">
    <citation type="journal article" date="2001" name="J. Bacteriol.">
        <title>Genetic characterization and evolutionary implications of a car gene cluster in the carbazole degrader Pseudomonas sp. strain CA10.</title>
        <authorList>
            <person name="Nojiri H."/>
            <person name="Sekiguchi H."/>
            <person name="Maeda K."/>
            <person name="Urata M."/>
            <person name="Nakai S."/>
            <person name="Yoshida T."/>
            <person name="Habe H."/>
            <person name="Omori T."/>
        </authorList>
    </citation>
    <scope>NUCLEOTIDE SEQUENCE [GENOMIC DNA]</scope>
    <source>
        <strain>CA10</strain>
    </source>
</reference>
<reference key="4">
    <citation type="journal article" date="2003" name="J. Mol. Biol.">
        <title>Complete nucleotide sequence of carbazole/dioxin-degrading plasmid pCAR1 in Pseudomonas resinovorans strain CA10 indicates its mosaicity and the presence of large catabolic transposon Tn4676.</title>
        <authorList>
            <person name="Maeda K."/>
            <person name="Nojiri H."/>
            <person name="Shintani M."/>
            <person name="Yoshida T."/>
            <person name="Habe H."/>
            <person name="Omori T."/>
        </authorList>
    </citation>
    <scope>NUCLEOTIDE SEQUENCE [GENOMIC DNA]</scope>
    <source>
        <plasmid>pCAR1</plasmid>
    </source>
</reference>
<reference key="5">
    <citation type="journal article" date="2004" name="J. Bacteriol.">
        <title>Transcriptional regulation of the ant operon, encoding two-component anthranilate 1,2-dioxygenase, on the carbazole-degradative plasmid pCAR1 of Pseudomonas resinovorans strain CA10.</title>
        <authorList>
            <person name="Urata M."/>
            <person name="Miyakoshi M."/>
            <person name="Kai S."/>
            <person name="Maeda K."/>
            <person name="Habe H."/>
            <person name="Omori T."/>
            <person name="Yamane H."/>
            <person name="Nojiri H."/>
        </authorList>
    </citation>
    <scope>NUCLEOTIDE SEQUENCE [GENOMIC DNA]</scope>
    <source>
        <strain>CA10</strain>
        <plasmid>pCAR1</plasmid>
    </source>
</reference>
<reference key="6">
    <citation type="journal article" date="2006" name="Appl. Environ. Microbiol.">
        <title>Characterization of the replication, maintenance, and transfer features of the IncP-7 plasmid pCAR1, which carries genes involved in carbazole and dioxin degradation.</title>
        <authorList>
            <person name="Shintani M."/>
            <person name="Yano H."/>
            <person name="Habe H."/>
            <person name="Omori T."/>
            <person name="Yamane H."/>
            <person name="Tsuda M."/>
            <person name="Nojiri H."/>
        </authorList>
    </citation>
    <scope>NUCLEOTIDE SEQUENCE [GENOMIC DNA]</scope>
    <source>
        <plasmid>pCAR1</plasmid>
    </source>
</reference>
<reference key="7">
    <citation type="journal article" date="2007" name="J. Bacteriol.">
        <title>Transcriptome analysis of Pseudomonas putida KT2440 harboring the completely sequenced IncP-7 plasmid pCAR1.</title>
        <authorList>
            <person name="Miyakoshi M."/>
            <person name="Shintani M."/>
            <person name="Terabayashi T."/>
            <person name="Kai S."/>
            <person name="Yamane H."/>
            <person name="Nojiri H."/>
        </authorList>
    </citation>
    <scope>NUCLEOTIDE SEQUENCE [GENOMIC DNA]</scope>
    <source>
        <plasmid>pCAR1</plasmid>
    </source>
</reference>
<reference key="8">
    <citation type="journal article" date="2009" name="Appl. Environ. Microbiol.">
        <title>Carbazole-degradative IncP-7 plasmid pCAR1.2 is structurally unstable in Pseudomonas fluorescens Pf0-1, which accumulates catechol, the intermediate of the carbazole degradation pathway.</title>
        <authorList>
            <person name="Takahashi Y."/>
            <person name="Shintani M."/>
            <person name="Li L."/>
            <person name="Yamane H."/>
            <person name="Nojiri H."/>
        </authorList>
    </citation>
    <scope>NUCLEOTIDE SEQUENCE [GENOMIC DNA]</scope>
    <source>
        <plasmid>pCAR1</plasmid>
    </source>
</reference>
<reference key="9">
    <citation type="journal article" date="2009" name="Biosci. Biotechnol. Biochem.">
        <title>The complete nucleotide sequence of pCAR2: pCAR2 and pCAR1 were structurally identical IncP-7 carbazole degradative plasmids.</title>
        <authorList>
            <person name="Takahashi Y."/>
            <person name="Shintani M."/>
            <person name="Yamane H."/>
            <person name="Nojiri H."/>
        </authorList>
    </citation>
    <scope>NUCLEOTIDE SEQUENCE [GENOMIC DNA]</scope>
    <source>
        <plasmid>pCAR1</plasmid>
    </source>
</reference>
<reference key="10">
    <citation type="journal article" date="2009" name="BMC Genomics">
        <title>High-resolution mapping of plasmid transcriptomes in different host bacteria.</title>
        <authorList>
            <person name="Miyakoshi M."/>
            <person name="Nishida H."/>
            <person name="Shintani M."/>
            <person name="Yamane H."/>
            <person name="Nojiri H."/>
        </authorList>
    </citation>
    <scope>NUCLEOTIDE SEQUENCE [GENOMIC DNA]</scope>
    <source>
        <plasmid>pCAR1</plasmid>
    </source>
</reference>
<reference key="11">
    <citation type="journal article" date="2010" name="Environ. Microbiol.">
        <title>Response of the Pseudomonas host chromosomal transcriptome to carriage of the IncP-7 plasmid pCAR1.</title>
        <authorList>
            <person name="Shintani M."/>
            <person name="Takahashi Y."/>
            <person name="Tokumaru H."/>
            <person name="Kadota K."/>
            <person name="Hara H."/>
            <person name="Miyakoshi M."/>
            <person name="Naito K."/>
            <person name="Yamane H."/>
            <person name="Nishida H."/>
            <person name="Nojiri H."/>
        </authorList>
    </citation>
    <scope>NUCLEOTIDE SEQUENCE [GENOMIC DNA]</scope>
    <source>
        <plasmid>pCAR1</plasmid>
    </source>
</reference>
<reference key="12">
    <citation type="journal article" date="2010" name="J. Bacteriol.">
        <title>Pmr, a histone-like protein H1 (H-NS) family protein encoded by the IncP-7 plasmid pCAR1, is a key global regulator that alters host function.</title>
        <authorList>
            <person name="Yun C.S."/>
            <person name="Suzuki C."/>
            <person name="Naito K."/>
            <person name="Takeda T."/>
            <person name="Takahashi Y."/>
            <person name="Sai F."/>
            <person name="Terabayashi T."/>
            <person name="Miyakoshi M."/>
            <person name="Shintani M."/>
            <person name="Nishida H."/>
            <person name="Yamane H."/>
            <person name="Nojiri H."/>
        </authorList>
    </citation>
    <scope>NUCLEOTIDE SEQUENCE [GENOMIC DNA]</scope>
    <source>
        <plasmid>pCAR1</plasmid>
    </source>
</reference>
<reference key="13">
    <citation type="journal article" date="2003" name="Biosci. Biotechnol. Biochem.">
        <title>Purification and characterization of meta-cleavage compound hydrolase from a carbazole degrader Pseudomonas resinovorans strain CA10.</title>
        <authorList>
            <person name="Nojiri H."/>
            <person name="Taira H."/>
            <person name="Iwata K."/>
            <person name="Morii K."/>
            <person name="Nam J.W."/>
            <person name="Yoshida T."/>
            <person name="Habe H."/>
            <person name="Nakamura S."/>
            <person name="Shimizu K."/>
            <person name="Yamane H."/>
            <person name="Omori T."/>
        </authorList>
    </citation>
    <scope>FUNCTION</scope>
    <scope>CATALYTIC ACTIVITY</scope>
    <scope>BIOPHYSICOCHEMICAL PROPERTIES</scope>
    <scope>SUBSTRATE SPECIFICITY</scope>
    <scope>SUBUNIT</scope>
    <source>
        <strain>CA10</strain>
    </source>
</reference>
<reference key="14">
    <citation type="journal article" date="2003" name="Protein Expr. Purif.">
        <title>Purification and properties of 2-hydroxy-6-oxo-6-(2'-aminophenyl)hexa-2,4-dienoic acid hydrolase involved in microbial degradation of carbazole.</title>
        <authorList>
            <person name="Riddle R.R."/>
            <person name="Gibbs P.R."/>
            <person name="Willson R.C."/>
            <person name="Benedik M.J."/>
        </authorList>
    </citation>
    <scope>FUNCTION</scope>
    <scope>CATALYTIC ACTIVITY</scope>
    <scope>MUTAGENESIS OF SER-114</scope>
    <scope>BIOPHYSICOCHEMICAL PROPERTIES</scope>
    <scope>SUBUNIT</scope>
    <source>
        <strain>CA10</strain>
    </source>
</reference>